<keyword id="KW-0007">Acetylation</keyword>
<keyword id="KW-0274">FAD</keyword>
<keyword id="KW-0285">Flavoprotein</keyword>
<keyword id="KW-0472">Membrane</keyword>
<keyword id="KW-0496">Mitochondrion</keyword>
<keyword id="KW-1000">Mitochondrion outer membrane</keyword>
<keyword id="KW-0560">Oxidoreductase</keyword>
<keyword id="KW-1185">Reference proteome</keyword>
<keyword id="KW-0812">Transmembrane</keyword>
<keyword id="KW-1133">Transmembrane helix</keyword>
<comment type="function">
    <text evidence="2 4">Catalyzes the oxidative deamination of primary and some secondary amines such as neurotransmitters, and exogenous amines including the tertiary amine, neurotoxin 1-methyl-4-phenyl-1,2,3,6-tetrahydropyridine (MPTP), with concomitant reduction of oxygen to hydrogen peroxide and participates in the metabolism of neuroactive and vasoactive amines in the central nervous system and peripheral tissues (PubMed:4156831). Preferentially degrades benzylamine and phenylethylamine (By similarity).</text>
</comment>
<comment type="catalytic activity">
    <reaction evidence="2">
        <text>a secondary aliphatic amine + O2 + H2O = a primary amine + an aldehyde + H2O2</text>
        <dbReference type="Rhea" id="RHEA:26414"/>
        <dbReference type="ChEBI" id="CHEBI:15377"/>
        <dbReference type="ChEBI" id="CHEBI:15379"/>
        <dbReference type="ChEBI" id="CHEBI:16240"/>
        <dbReference type="ChEBI" id="CHEBI:17478"/>
        <dbReference type="ChEBI" id="CHEBI:58855"/>
        <dbReference type="ChEBI" id="CHEBI:65296"/>
        <dbReference type="EC" id="1.4.3.4"/>
    </reaction>
</comment>
<comment type="catalytic activity">
    <reaction evidence="2">
        <text>(R)-adrenaline + O2 + H2O = (R)-3,4-dihydroxymandelaldehyde + methylamine + H2O2</text>
        <dbReference type="Rhea" id="RHEA:51168"/>
        <dbReference type="ChEBI" id="CHEBI:15377"/>
        <dbReference type="ChEBI" id="CHEBI:15379"/>
        <dbReference type="ChEBI" id="CHEBI:16240"/>
        <dbReference type="ChEBI" id="CHEBI:59338"/>
        <dbReference type="ChEBI" id="CHEBI:71406"/>
        <dbReference type="ChEBI" id="CHEBI:180943"/>
    </reaction>
</comment>
<comment type="catalytic activity">
    <reaction evidence="4">
        <text>a primary methyl amine + O2 + H2O = an aldehyde + H2O2 + NH4(+)</text>
        <dbReference type="Rhea" id="RHEA:16153"/>
        <dbReference type="ChEBI" id="CHEBI:15377"/>
        <dbReference type="ChEBI" id="CHEBI:15379"/>
        <dbReference type="ChEBI" id="CHEBI:16240"/>
        <dbReference type="ChEBI" id="CHEBI:17478"/>
        <dbReference type="ChEBI" id="CHEBI:28938"/>
        <dbReference type="ChEBI" id="CHEBI:228804"/>
        <dbReference type="EC" id="1.4.3.21"/>
    </reaction>
    <physiologicalReaction direction="left-to-right" evidence="4">
        <dbReference type="Rhea" id="RHEA:16154"/>
    </physiologicalReaction>
</comment>
<comment type="catalytic activity">
    <reaction evidence="2">
        <text>benzylamine + O2 + H2O = benzaldehyde + H2O2 + NH4(+)</text>
        <dbReference type="Rhea" id="RHEA:59424"/>
        <dbReference type="ChEBI" id="CHEBI:15377"/>
        <dbReference type="ChEBI" id="CHEBI:15379"/>
        <dbReference type="ChEBI" id="CHEBI:16240"/>
        <dbReference type="ChEBI" id="CHEBI:17169"/>
        <dbReference type="ChEBI" id="CHEBI:28938"/>
        <dbReference type="ChEBI" id="CHEBI:225238"/>
    </reaction>
    <physiologicalReaction direction="left-to-right" evidence="2">
        <dbReference type="Rhea" id="RHEA:59425"/>
    </physiologicalReaction>
</comment>
<comment type="catalytic activity">
    <reaction evidence="2">
        <text>dopamine + O2 + H2O = 3,4-dihydroxyphenylacetaldehyde + H2O2 + NH4(+)</text>
        <dbReference type="Rhea" id="RHEA:27946"/>
        <dbReference type="ChEBI" id="CHEBI:15377"/>
        <dbReference type="ChEBI" id="CHEBI:15379"/>
        <dbReference type="ChEBI" id="CHEBI:16240"/>
        <dbReference type="ChEBI" id="CHEBI:27978"/>
        <dbReference type="ChEBI" id="CHEBI:28938"/>
        <dbReference type="ChEBI" id="CHEBI:59905"/>
    </reaction>
</comment>
<comment type="catalytic activity">
    <reaction evidence="2">
        <text>tyramine + O2 + H2O = (4-hydroxyphenyl)acetaldehyde + H2O2 + NH4(+)</text>
        <dbReference type="Rhea" id="RHEA:30591"/>
        <dbReference type="ChEBI" id="CHEBI:15377"/>
        <dbReference type="ChEBI" id="CHEBI:15379"/>
        <dbReference type="ChEBI" id="CHEBI:15621"/>
        <dbReference type="ChEBI" id="CHEBI:16240"/>
        <dbReference type="ChEBI" id="CHEBI:28938"/>
        <dbReference type="ChEBI" id="CHEBI:327995"/>
    </reaction>
</comment>
<comment type="catalytic activity">
    <reaction evidence="2">
        <text>(R)-noradrenaline + O2 + H2O = (R)-3,4-dihydroxymandelaldehyde + H2O2 + NH4(+)</text>
        <dbReference type="Rhea" id="RHEA:69076"/>
        <dbReference type="ChEBI" id="CHEBI:15377"/>
        <dbReference type="ChEBI" id="CHEBI:15379"/>
        <dbReference type="ChEBI" id="CHEBI:16240"/>
        <dbReference type="ChEBI" id="CHEBI:28938"/>
        <dbReference type="ChEBI" id="CHEBI:72587"/>
        <dbReference type="ChEBI" id="CHEBI:180943"/>
    </reaction>
</comment>
<comment type="catalytic activity">
    <reaction evidence="2">
        <text>2-phenylethylamine + O2 + H2O = 2-phenylacetaldehyde + H2O2 + NH4(+)</text>
        <dbReference type="Rhea" id="RHEA:25265"/>
        <dbReference type="ChEBI" id="CHEBI:15377"/>
        <dbReference type="ChEBI" id="CHEBI:15379"/>
        <dbReference type="ChEBI" id="CHEBI:16240"/>
        <dbReference type="ChEBI" id="CHEBI:16424"/>
        <dbReference type="ChEBI" id="CHEBI:28938"/>
        <dbReference type="ChEBI" id="CHEBI:225237"/>
    </reaction>
</comment>
<comment type="catalytic activity">
    <reaction evidence="4">
        <text>N-acetylputrescine + O2 + H2O = 4-acetamidobutanal + H2O2 + NH4(+)</text>
        <dbReference type="Rhea" id="RHEA:70283"/>
        <dbReference type="ChEBI" id="CHEBI:7386"/>
        <dbReference type="ChEBI" id="CHEBI:15377"/>
        <dbReference type="ChEBI" id="CHEBI:15379"/>
        <dbReference type="ChEBI" id="CHEBI:16240"/>
        <dbReference type="ChEBI" id="CHEBI:28938"/>
        <dbReference type="ChEBI" id="CHEBI:58263"/>
    </reaction>
    <physiologicalReaction direction="left-to-right" evidence="4">
        <dbReference type="Rhea" id="RHEA:70284"/>
    </physiologicalReaction>
</comment>
<comment type="cofactor">
    <cofactor evidence="2">
        <name>FAD</name>
        <dbReference type="ChEBI" id="CHEBI:57692"/>
    </cofactor>
</comment>
<comment type="subunit">
    <text evidence="1">Monomer, homo- or heterodimer (containing two subunits of similar size). Each subunit contains a covalently bound flavin. Enzymatically active as monomer (By similarity).</text>
</comment>
<comment type="subcellular location">
    <subcellularLocation>
        <location evidence="1">Mitochondrion outer membrane</location>
        <topology evidence="1">Single-pass type IV membrane protein</topology>
        <orientation evidence="1">Cytoplasmic side</orientation>
    </subcellularLocation>
</comment>
<comment type="similarity">
    <text evidence="5">Belongs to the flavin monoamine oxidase family.</text>
</comment>
<evidence type="ECO:0000250" key="1"/>
<evidence type="ECO:0000250" key="2">
    <source>
        <dbReference type="UniProtKB" id="P27338"/>
    </source>
</evidence>
<evidence type="ECO:0000250" key="3">
    <source>
        <dbReference type="UniProtKB" id="P56560"/>
    </source>
</evidence>
<evidence type="ECO:0000269" key="4">
    <source>
    </source>
</evidence>
<evidence type="ECO:0000305" key="5"/>
<evidence type="ECO:0000312" key="6">
    <source>
        <dbReference type="MGI" id="MGI:96916"/>
    </source>
</evidence>
<evidence type="ECO:0007744" key="7">
    <source>
    </source>
</evidence>
<sequence length="520" mass="58558">MSNKSDVIVVGGGISGMAAAKLLHDCGLSVVVLEARDRVGGRTYTIRNKNVKYVDLGGSYVGPTQNRILRLAKELGLETYKVNEVERLIHFVKGKSYAFRGPFPPVWNPITYLDNNNLWRTMDEMGQEIPSDAPWKAPLAEEWDYMTMKELLDKICWTKSTKQIATLFVNLCVTAETHEVSALWFLWYVKQCGGTTRIISTTNGGQERKFIGGSGQVSERIKDILGDRVKLERPVIHIDQTGENVIVKTLNHEIYEAKYVISAIPPALGMKIHYSPPLPMLRNQLISRVPLGSVIKCMVYYKEPFWRKKDFCGTMVIEGEEAPIAYTLDDTKPDGTYAAIMGFILAHKARKLVRLTKEERLRKLCELYAKVLNSQEALQPVHYEEKNWCEEQYSGGCYTTYFPPGILTQYGRVLRQPVGKIFFAGTETASHWSGYMEGAVEAGERAAREILHAIGKIPEDEIWQPEPESLDVPARPITSTFLERHLPSVPGLLKLFGLTTILSATALGFLAHKRGLFVHF</sequence>
<protein>
    <recommendedName>
        <fullName evidence="5">Amine oxidase [flavin-containing] B</fullName>
        <ecNumber evidence="4">1.4.3.21</ecNumber>
        <ecNumber evidence="2">1.4.3.4</ecNumber>
    </recommendedName>
    <alternativeName>
        <fullName>Monoamine oxidase type B</fullName>
        <shortName>MAO-B</shortName>
    </alternativeName>
</protein>
<feature type="initiator methionine" description="Removed" evidence="3">
    <location>
        <position position="1"/>
    </location>
</feature>
<feature type="chain" id="PRO_0000099860" description="Amine oxidase [flavin-containing] B">
    <location>
        <begin position="2"/>
        <end position="520"/>
    </location>
</feature>
<feature type="topological domain" description="Cytoplasmic" evidence="1">
    <location>
        <begin position="2"/>
        <end position="489"/>
    </location>
</feature>
<feature type="transmembrane region" description="Helical; Anchor for type IV membrane protein" evidence="1">
    <location>
        <begin position="490"/>
        <end position="516"/>
    </location>
</feature>
<feature type="topological domain" description="Mitochondrial intermembrane" evidence="1">
    <location>
        <begin position="517"/>
        <end position="520"/>
    </location>
</feature>
<feature type="site" description="Important for catalytic activity" evidence="1">
    <location>
        <position position="156"/>
    </location>
</feature>
<feature type="site" description="Important for catalytic activity" evidence="1">
    <location>
        <position position="365"/>
    </location>
</feature>
<feature type="site" description="Important for catalytic activity" evidence="1">
    <location>
        <position position="382"/>
    </location>
</feature>
<feature type="modified residue" description="N-acetylserine" evidence="3">
    <location>
        <position position="2"/>
    </location>
</feature>
<feature type="modified residue" description="N6-acetyllysine" evidence="7">
    <location>
        <position position="52"/>
    </location>
</feature>
<feature type="modified residue" description="N6-acetyllysine" evidence="7">
    <location>
        <position position="248"/>
    </location>
</feature>
<feature type="modified residue" description="S-8alpha-FAD cysteine" evidence="2">
    <location>
        <position position="397"/>
    </location>
</feature>
<feature type="sequence conflict" description="In Ref. 1; BAC35634." evidence="5" ref="1">
    <original>T</original>
    <variation>S</variation>
    <location>
        <position position="408"/>
    </location>
</feature>
<feature type="sequence conflict" description="In Ref. 1; BAC27571." evidence="5" ref="1">
    <original>L</original>
    <variation>M</variation>
    <location>
        <position position="482"/>
    </location>
</feature>
<gene>
    <name evidence="6" type="primary">Maob</name>
</gene>
<name>AOFB_MOUSE</name>
<accession>Q8BW75</accession>
<accession>Q14CG9</accession>
<accession>Q8C0B2</accession>
<organism>
    <name type="scientific">Mus musculus</name>
    <name type="common">Mouse</name>
    <dbReference type="NCBI Taxonomy" id="10090"/>
    <lineage>
        <taxon>Eukaryota</taxon>
        <taxon>Metazoa</taxon>
        <taxon>Chordata</taxon>
        <taxon>Craniata</taxon>
        <taxon>Vertebrata</taxon>
        <taxon>Euteleostomi</taxon>
        <taxon>Mammalia</taxon>
        <taxon>Eutheria</taxon>
        <taxon>Euarchontoglires</taxon>
        <taxon>Glires</taxon>
        <taxon>Rodentia</taxon>
        <taxon>Myomorpha</taxon>
        <taxon>Muroidea</taxon>
        <taxon>Muridae</taxon>
        <taxon>Murinae</taxon>
        <taxon>Mus</taxon>
        <taxon>Mus</taxon>
    </lineage>
</organism>
<dbReference type="EC" id="1.4.3.21" evidence="4"/>
<dbReference type="EC" id="1.4.3.4" evidence="2"/>
<dbReference type="EMBL" id="AK031833">
    <property type="protein sequence ID" value="BAC27571.1"/>
    <property type="molecule type" value="mRNA"/>
</dbReference>
<dbReference type="EMBL" id="AK054050">
    <property type="protein sequence ID" value="BAC35634.1"/>
    <property type="molecule type" value="mRNA"/>
</dbReference>
<dbReference type="EMBL" id="AL732321">
    <property type="status" value="NOT_ANNOTATED_CDS"/>
    <property type="molecule type" value="Genomic_DNA"/>
</dbReference>
<dbReference type="EMBL" id="AL831729">
    <property type="status" value="NOT_ANNOTATED_CDS"/>
    <property type="molecule type" value="Genomic_DNA"/>
</dbReference>
<dbReference type="EMBL" id="CH466584">
    <property type="protein sequence ID" value="EDL35718.1"/>
    <property type="molecule type" value="Genomic_DNA"/>
</dbReference>
<dbReference type="EMBL" id="BC113182">
    <property type="protein sequence ID" value="AAI13183.1"/>
    <property type="molecule type" value="mRNA"/>
</dbReference>
<dbReference type="EMBL" id="BC113788">
    <property type="protein sequence ID" value="AAI13789.1"/>
    <property type="molecule type" value="mRNA"/>
</dbReference>
<dbReference type="CCDS" id="CCDS40882.1"/>
<dbReference type="RefSeq" id="NP_766366.2">
    <property type="nucleotide sequence ID" value="NM_172778.2"/>
</dbReference>
<dbReference type="SMR" id="Q8BW75"/>
<dbReference type="BioGRID" id="224990">
    <property type="interactions" value="10"/>
</dbReference>
<dbReference type="FunCoup" id="Q8BW75">
    <property type="interactions" value="593"/>
</dbReference>
<dbReference type="IntAct" id="Q8BW75">
    <property type="interactions" value="2"/>
</dbReference>
<dbReference type="STRING" id="10090.ENSMUSP00000040550"/>
<dbReference type="BindingDB" id="Q8BW75"/>
<dbReference type="ChEMBL" id="CHEMBL3050"/>
<dbReference type="DrugCentral" id="Q8BW75"/>
<dbReference type="GlyGen" id="Q8BW75">
    <property type="glycosylation" value="2 sites, 1 N-linked glycan (1 site), 1 O-linked glycan (1 site)"/>
</dbReference>
<dbReference type="iPTMnet" id="Q8BW75"/>
<dbReference type="PhosphoSitePlus" id="Q8BW75"/>
<dbReference type="SwissPalm" id="Q8BW75"/>
<dbReference type="jPOST" id="Q8BW75"/>
<dbReference type="PaxDb" id="10090-ENSMUSP00000040550"/>
<dbReference type="PeptideAtlas" id="Q8BW75"/>
<dbReference type="ProteomicsDB" id="281780"/>
<dbReference type="Pumba" id="Q8BW75"/>
<dbReference type="Antibodypedia" id="770">
    <property type="antibodies" value="377 antibodies from 37 providers"/>
</dbReference>
<dbReference type="DNASU" id="109731"/>
<dbReference type="Ensembl" id="ENSMUST00000040820.13">
    <property type="protein sequence ID" value="ENSMUSP00000040550.7"/>
    <property type="gene ID" value="ENSMUSG00000040147.15"/>
</dbReference>
<dbReference type="GeneID" id="109731"/>
<dbReference type="KEGG" id="mmu:109731"/>
<dbReference type="UCSC" id="uc009ssb.2">
    <property type="organism name" value="mouse"/>
</dbReference>
<dbReference type="AGR" id="MGI:96916"/>
<dbReference type="CTD" id="4129"/>
<dbReference type="MGI" id="MGI:96916">
    <property type="gene designation" value="Maob"/>
</dbReference>
<dbReference type="VEuPathDB" id="HostDB:ENSMUSG00000040147"/>
<dbReference type="eggNOG" id="KOG0029">
    <property type="taxonomic scope" value="Eukaryota"/>
</dbReference>
<dbReference type="GeneTree" id="ENSGT00940000161545"/>
<dbReference type="HOGENOM" id="CLU_004498_0_1_1"/>
<dbReference type="InParanoid" id="Q8BW75"/>
<dbReference type="OMA" id="PIHWAGT"/>
<dbReference type="OrthoDB" id="7777654at2759"/>
<dbReference type="PhylomeDB" id="Q8BW75"/>
<dbReference type="TreeFam" id="TF313314"/>
<dbReference type="BRENDA" id="1.4.3.4">
    <property type="organism ID" value="3474"/>
</dbReference>
<dbReference type="Reactome" id="R-MMU-141333">
    <property type="pathway name" value="Biogenic amines are oxidatively deaminated to aldehydes by MAOA and MAOB"/>
</dbReference>
<dbReference type="BioGRID-ORCS" id="109731">
    <property type="hits" value="4 hits in 79 CRISPR screens"/>
</dbReference>
<dbReference type="CD-CODE" id="CE726F99">
    <property type="entry name" value="Postsynaptic density"/>
</dbReference>
<dbReference type="ChiTaRS" id="Maob">
    <property type="organism name" value="mouse"/>
</dbReference>
<dbReference type="PRO" id="PR:Q8BW75"/>
<dbReference type="Proteomes" id="UP000000589">
    <property type="component" value="Chromosome X"/>
</dbReference>
<dbReference type="RNAct" id="Q8BW75">
    <property type="molecule type" value="protein"/>
</dbReference>
<dbReference type="Bgee" id="ENSMUSG00000040147">
    <property type="expression patterns" value="Expressed in epithelium of small intestine and 236 other cell types or tissues"/>
</dbReference>
<dbReference type="ExpressionAtlas" id="Q8BW75">
    <property type="expression patterns" value="baseline and differential"/>
</dbReference>
<dbReference type="GO" id="GO:0005743">
    <property type="term" value="C:mitochondrial inner membrane"/>
    <property type="evidence" value="ECO:0007005"/>
    <property type="project" value="MGI"/>
</dbReference>
<dbReference type="GO" id="GO:0005741">
    <property type="term" value="C:mitochondrial outer membrane"/>
    <property type="evidence" value="ECO:0007669"/>
    <property type="project" value="UniProtKB-SubCell"/>
</dbReference>
<dbReference type="GO" id="GO:0005739">
    <property type="term" value="C:mitochondrion"/>
    <property type="evidence" value="ECO:0007005"/>
    <property type="project" value="MGI"/>
</dbReference>
<dbReference type="GO" id="GO:0097621">
    <property type="term" value="F:monoamine oxidase activity"/>
    <property type="evidence" value="ECO:0000250"/>
    <property type="project" value="UniProtKB"/>
</dbReference>
<dbReference type="GO" id="GO:0008131">
    <property type="term" value="F:primary methylamine oxidase activity"/>
    <property type="evidence" value="ECO:0000250"/>
    <property type="project" value="UniProtKB"/>
</dbReference>
<dbReference type="FunFam" id="1.10.405.10:FF:000005">
    <property type="entry name" value="Amine oxidase [flavin-containing]"/>
    <property type="match status" value="1"/>
</dbReference>
<dbReference type="Gene3D" id="3.90.660.10">
    <property type="match status" value="1"/>
</dbReference>
<dbReference type="Gene3D" id="6.10.250.130">
    <property type="match status" value="1"/>
</dbReference>
<dbReference type="Gene3D" id="3.50.50.60">
    <property type="entry name" value="FAD/NAD(P)-binding domain"/>
    <property type="match status" value="1"/>
</dbReference>
<dbReference type="Gene3D" id="1.10.405.10">
    <property type="entry name" value="Guanine Nucleotide Dissociation Inhibitor, domain 1"/>
    <property type="match status" value="1"/>
</dbReference>
<dbReference type="InterPro" id="IPR002937">
    <property type="entry name" value="Amino_oxidase"/>
</dbReference>
<dbReference type="InterPro" id="IPR036188">
    <property type="entry name" value="FAD/NAD-bd_sf"/>
</dbReference>
<dbReference type="InterPro" id="IPR001613">
    <property type="entry name" value="Flavin_amine_oxidase"/>
</dbReference>
<dbReference type="InterPro" id="IPR050703">
    <property type="entry name" value="Flavin_MAO"/>
</dbReference>
<dbReference type="PANTHER" id="PTHR43563">
    <property type="entry name" value="AMINE OXIDASE"/>
    <property type="match status" value="1"/>
</dbReference>
<dbReference type="PANTHER" id="PTHR43563:SF1">
    <property type="entry name" value="AMINE OXIDASE [FLAVIN-CONTAINING] B"/>
    <property type="match status" value="1"/>
</dbReference>
<dbReference type="Pfam" id="PF01593">
    <property type="entry name" value="Amino_oxidase"/>
    <property type="match status" value="1"/>
</dbReference>
<dbReference type="PRINTS" id="PR00757">
    <property type="entry name" value="AMINEOXDASEF"/>
</dbReference>
<dbReference type="SUPFAM" id="SSF54373">
    <property type="entry name" value="FAD-linked reductases, C-terminal domain"/>
    <property type="match status" value="1"/>
</dbReference>
<dbReference type="SUPFAM" id="SSF51905">
    <property type="entry name" value="FAD/NAD(P)-binding domain"/>
    <property type="match status" value="1"/>
</dbReference>
<reference key="1">
    <citation type="journal article" date="2005" name="Science">
        <title>The transcriptional landscape of the mammalian genome.</title>
        <authorList>
            <person name="Carninci P."/>
            <person name="Kasukawa T."/>
            <person name="Katayama S."/>
            <person name="Gough J."/>
            <person name="Frith M.C."/>
            <person name="Maeda N."/>
            <person name="Oyama R."/>
            <person name="Ravasi T."/>
            <person name="Lenhard B."/>
            <person name="Wells C."/>
            <person name="Kodzius R."/>
            <person name="Shimokawa K."/>
            <person name="Bajic V.B."/>
            <person name="Brenner S.E."/>
            <person name="Batalov S."/>
            <person name="Forrest A.R."/>
            <person name="Zavolan M."/>
            <person name="Davis M.J."/>
            <person name="Wilming L.G."/>
            <person name="Aidinis V."/>
            <person name="Allen J.E."/>
            <person name="Ambesi-Impiombato A."/>
            <person name="Apweiler R."/>
            <person name="Aturaliya R.N."/>
            <person name="Bailey T.L."/>
            <person name="Bansal M."/>
            <person name="Baxter L."/>
            <person name="Beisel K.W."/>
            <person name="Bersano T."/>
            <person name="Bono H."/>
            <person name="Chalk A.M."/>
            <person name="Chiu K.P."/>
            <person name="Choudhary V."/>
            <person name="Christoffels A."/>
            <person name="Clutterbuck D.R."/>
            <person name="Crowe M.L."/>
            <person name="Dalla E."/>
            <person name="Dalrymple B.P."/>
            <person name="de Bono B."/>
            <person name="Della Gatta G."/>
            <person name="di Bernardo D."/>
            <person name="Down T."/>
            <person name="Engstrom P."/>
            <person name="Fagiolini M."/>
            <person name="Faulkner G."/>
            <person name="Fletcher C.F."/>
            <person name="Fukushima T."/>
            <person name="Furuno M."/>
            <person name="Futaki S."/>
            <person name="Gariboldi M."/>
            <person name="Georgii-Hemming P."/>
            <person name="Gingeras T.R."/>
            <person name="Gojobori T."/>
            <person name="Green R.E."/>
            <person name="Gustincich S."/>
            <person name="Harbers M."/>
            <person name="Hayashi Y."/>
            <person name="Hensch T.K."/>
            <person name="Hirokawa N."/>
            <person name="Hill D."/>
            <person name="Huminiecki L."/>
            <person name="Iacono M."/>
            <person name="Ikeo K."/>
            <person name="Iwama A."/>
            <person name="Ishikawa T."/>
            <person name="Jakt M."/>
            <person name="Kanapin A."/>
            <person name="Katoh M."/>
            <person name="Kawasawa Y."/>
            <person name="Kelso J."/>
            <person name="Kitamura H."/>
            <person name="Kitano H."/>
            <person name="Kollias G."/>
            <person name="Krishnan S.P."/>
            <person name="Kruger A."/>
            <person name="Kummerfeld S.K."/>
            <person name="Kurochkin I.V."/>
            <person name="Lareau L.F."/>
            <person name="Lazarevic D."/>
            <person name="Lipovich L."/>
            <person name="Liu J."/>
            <person name="Liuni S."/>
            <person name="McWilliam S."/>
            <person name="Madan Babu M."/>
            <person name="Madera M."/>
            <person name="Marchionni L."/>
            <person name="Matsuda H."/>
            <person name="Matsuzawa S."/>
            <person name="Miki H."/>
            <person name="Mignone F."/>
            <person name="Miyake S."/>
            <person name="Morris K."/>
            <person name="Mottagui-Tabar S."/>
            <person name="Mulder N."/>
            <person name="Nakano N."/>
            <person name="Nakauchi H."/>
            <person name="Ng P."/>
            <person name="Nilsson R."/>
            <person name="Nishiguchi S."/>
            <person name="Nishikawa S."/>
            <person name="Nori F."/>
            <person name="Ohara O."/>
            <person name="Okazaki Y."/>
            <person name="Orlando V."/>
            <person name="Pang K.C."/>
            <person name="Pavan W.J."/>
            <person name="Pavesi G."/>
            <person name="Pesole G."/>
            <person name="Petrovsky N."/>
            <person name="Piazza S."/>
            <person name="Reed J."/>
            <person name="Reid J.F."/>
            <person name="Ring B.Z."/>
            <person name="Ringwald M."/>
            <person name="Rost B."/>
            <person name="Ruan Y."/>
            <person name="Salzberg S.L."/>
            <person name="Sandelin A."/>
            <person name="Schneider C."/>
            <person name="Schoenbach C."/>
            <person name="Sekiguchi K."/>
            <person name="Semple C.A."/>
            <person name="Seno S."/>
            <person name="Sessa L."/>
            <person name="Sheng Y."/>
            <person name="Shibata Y."/>
            <person name="Shimada H."/>
            <person name="Shimada K."/>
            <person name="Silva D."/>
            <person name="Sinclair B."/>
            <person name="Sperling S."/>
            <person name="Stupka E."/>
            <person name="Sugiura K."/>
            <person name="Sultana R."/>
            <person name="Takenaka Y."/>
            <person name="Taki K."/>
            <person name="Tammoja K."/>
            <person name="Tan S.L."/>
            <person name="Tang S."/>
            <person name="Taylor M.S."/>
            <person name="Tegner J."/>
            <person name="Teichmann S.A."/>
            <person name="Ueda H.R."/>
            <person name="van Nimwegen E."/>
            <person name="Verardo R."/>
            <person name="Wei C.L."/>
            <person name="Yagi K."/>
            <person name="Yamanishi H."/>
            <person name="Zabarovsky E."/>
            <person name="Zhu S."/>
            <person name="Zimmer A."/>
            <person name="Hide W."/>
            <person name="Bult C."/>
            <person name="Grimmond S.M."/>
            <person name="Teasdale R.D."/>
            <person name="Liu E.T."/>
            <person name="Brusic V."/>
            <person name="Quackenbush J."/>
            <person name="Wahlestedt C."/>
            <person name="Mattick J.S."/>
            <person name="Hume D.A."/>
            <person name="Kai C."/>
            <person name="Sasaki D."/>
            <person name="Tomaru Y."/>
            <person name="Fukuda S."/>
            <person name="Kanamori-Katayama M."/>
            <person name="Suzuki M."/>
            <person name="Aoki J."/>
            <person name="Arakawa T."/>
            <person name="Iida J."/>
            <person name="Imamura K."/>
            <person name="Itoh M."/>
            <person name="Kato T."/>
            <person name="Kawaji H."/>
            <person name="Kawagashira N."/>
            <person name="Kawashima T."/>
            <person name="Kojima M."/>
            <person name="Kondo S."/>
            <person name="Konno H."/>
            <person name="Nakano K."/>
            <person name="Ninomiya N."/>
            <person name="Nishio T."/>
            <person name="Okada M."/>
            <person name="Plessy C."/>
            <person name="Shibata K."/>
            <person name="Shiraki T."/>
            <person name="Suzuki S."/>
            <person name="Tagami M."/>
            <person name="Waki K."/>
            <person name="Watahiki A."/>
            <person name="Okamura-Oho Y."/>
            <person name="Suzuki H."/>
            <person name="Kawai J."/>
            <person name="Hayashizaki Y."/>
        </authorList>
    </citation>
    <scope>NUCLEOTIDE SEQUENCE [LARGE SCALE MRNA]</scope>
    <source>
        <strain>C57BL/6J</strain>
        <tissue>Medulla oblongata</tissue>
        <tissue>Oviduct</tissue>
    </source>
</reference>
<reference key="2">
    <citation type="journal article" date="2009" name="PLoS Biol.">
        <title>Lineage-specific biology revealed by a finished genome assembly of the mouse.</title>
        <authorList>
            <person name="Church D.M."/>
            <person name="Goodstadt L."/>
            <person name="Hillier L.W."/>
            <person name="Zody M.C."/>
            <person name="Goldstein S."/>
            <person name="She X."/>
            <person name="Bult C.J."/>
            <person name="Agarwala R."/>
            <person name="Cherry J.L."/>
            <person name="DiCuccio M."/>
            <person name="Hlavina W."/>
            <person name="Kapustin Y."/>
            <person name="Meric P."/>
            <person name="Maglott D."/>
            <person name="Birtle Z."/>
            <person name="Marques A.C."/>
            <person name="Graves T."/>
            <person name="Zhou S."/>
            <person name="Teague B."/>
            <person name="Potamousis K."/>
            <person name="Churas C."/>
            <person name="Place M."/>
            <person name="Herschleb J."/>
            <person name="Runnheim R."/>
            <person name="Forrest D."/>
            <person name="Amos-Landgraf J."/>
            <person name="Schwartz D.C."/>
            <person name="Cheng Z."/>
            <person name="Lindblad-Toh K."/>
            <person name="Eichler E.E."/>
            <person name="Ponting C.P."/>
        </authorList>
    </citation>
    <scope>NUCLEOTIDE SEQUENCE [LARGE SCALE GENOMIC DNA]</scope>
    <source>
        <strain>C57BL/6J</strain>
    </source>
</reference>
<reference key="3">
    <citation type="submission" date="2005-07" db="EMBL/GenBank/DDBJ databases">
        <authorList>
            <person name="Mural R.J."/>
            <person name="Adams M.D."/>
            <person name="Myers E.W."/>
            <person name="Smith H.O."/>
            <person name="Venter J.C."/>
        </authorList>
    </citation>
    <scope>NUCLEOTIDE SEQUENCE [LARGE SCALE GENOMIC DNA]</scope>
</reference>
<reference key="4">
    <citation type="journal article" date="2004" name="Genome Res.">
        <title>The status, quality, and expansion of the NIH full-length cDNA project: the Mammalian Gene Collection (MGC).</title>
        <authorList>
            <consortium name="The MGC Project Team"/>
        </authorList>
    </citation>
    <scope>NUCLEOTIDE SEQUENCE [LARGE SCALE MRNA]</scope>
</reference>
<reference key="5">
    <citation type="journal article" date="1974" name="Biochem. J.">
        <title>Putrescine catabolism in mammalian brain.</title>
        <authorList>
            <person name="Seiler N."/>
            <person name="Al-Therib M.J."/>
        </authorList>
    </citation>
    <scope>FUNCTION</scope>
    <scope>CATALYTIC ACTIVITY</scope>
</reference>
<reference key="6">
    <citation type="journal article" date="2010" name="Cell">
        <title>A tissue-specific atlas of mouse protein phosphorylation and expression.</title>
        <authorList>
            <person name="Huttlin E.L."/>
            <person name="Jedrychowski M.P."/>
            <person name="Elias J.E."/>
            <person name="Goswami T."/>
            <person name="Rad R."/>
            <person name="Beausoleil S.A."/>
            <person name="Villen J."/>
            <person name="Haas W."/>
            <person name="Sowa M.E."/>
            <person name="Gygi S.P."/>
        </authorList>
    </citation>
    <scope>IDENTIFICATION BY MASS SPECTROMETRY [LARGE SCALE ANALYSIS]</scope>
    <source>
        <tissue>Brain</tissue>
        <tissue>Brown adipose tissue</tissue>
        <tissue>Heart</tissue>
        <tissue>Liver</tissue>
        <tissue>Lung</tissue>
        <tissue>Pancreas</tissue>
        <tissue>Testis</tissue>
    </source>
</reference>
<reference key="7">
    <citation type="journal article" date="2013" name="Proc. Natl. Acad. Sci. U.S.A.">
        <title>Label-free quantitative proteomics of the lysine acetylome in mitochondria identifies substrates of SIRT3 in metabolic pathways.</title>
        <authorList>
            <person name="Rardin M.J."/>
            <person name="Newman J.C."/>
            <person name="Held J.M."/>
            <person name="Cusack M.P."/>
            <person name="Sorensen D.J."/>
            <person name="Li B."/>
            <person name="Schilling B."/>
            <person name="Mooney S.D."/>
            <person name="Kahn C.R."/>
            <person name="Verdin E."/>
            <person name="Gibson B.W."/>
        </authorList>
    </citation>
    <scope>ACETYLATION [LARGE SCALE ANALYSIS] AT LYS-52 AND LYS-248</scope>
    <scope>IDENTIFICATION BY MASS SPECTROMETRY [LARGE SCALE ANALYSIS]</scope>
    <source>
        <tissue>Liver</tissue>
    </source>
</reference>
<proteinExistence type="evidence at protein level"/>